<gene>
    <name evidence="2 5" type="primary">Trappc6b</name>
</gene>
<keyword id="KW-0256">Endoplasmic reticulum</keyword>
<keyword id="KW-0333">Golgi apparatus</keyword>
<keyword id="KW-0524">Neurogenesis</keyword>
<keyword id="KW-1185">Reference proteome</keyword>
<sequence>MADEALFLLLHNEMVSGVYKSAEQGEVENGRCVTKLESMGFRVGQGLIERFTKDTARFKDELDIMKFICKDFWTTVFKKQIDNLRTNHQGIYVLQDNKFRLLIQLSAGKQYLEHASKYLAFTCGLIRGGLSNLGIKSIVTAEVSSMPACKFQVMIQKL</sequence>
<reference key="1">
    <citation type="journal article" date="2005" name="Science">
        <title>The transcriptional landscape of the mammalian genome.</title>
        <authorList>
            <person name="Carninci P."/>
            <person name="Kasukawa T."/>
            <person name="Katayama S."/>
            <person name="Gough J."/>
            <person name="Frith M.C."/>
            <person name="Maeda N."/>
            <person name="Oyama R."/>
            <person name="Ravasi T."/>
            <person name="Lenhard B."/>
            <person name="Wells C."/>
            <person name="Kodzius R."/>
            <person name="Shimokawa K."/>
            <person name="Bajic V.B."/>
            <person name="Brenner S.E."/>
            <person name="Batalov S."/>
            <person name="Forrest A.R."/>
            <person name="Zavolan M."/>
            <person name="Davis M.J."/>
            <person name="Wilming L.G."/>
            <person name="Aidinis V."/>
            <person name="Allen J.E."/>
            <person name="Ambesi-Impiombato A."/>
            <person name="Apweiler R."/>
            <person name="Aturaliya R.N."/>
            <person name="Bailey T.L."/>
            <person name="Bansal M."/>
            <person name="Baxter L."/>
            <person name="Beisel K.W."/>
            <person name="Bersano T."/>
            <person name="Bono H."/>
            <person name="Chalk A.M."/>
            <person name="Chiu K.P."/>
            <person name="Choudhary V."/>
            <person name="Christoffels A."/>
            <person name="Clutterbuck D.R."/>
            <person name="Crowe M.L."/>
            <person name="Dalla E."/>
            <person name="Dalrymple B.P."/>
            <person name="de Bono B."/>
            <person name="Della Gatta G."/>
            <person name="di Bernardo D."/>
            <person name="Down T."/>
            <person name="Engstrom P."/>
            <person name="Fagiolini M."/>
            <person name="Faulkner G."/>
            <person name="Fletcher C.F."/>
            <person name="Fukushima T."/>
            <person name="Furuno M."/>
            <person name="Futaki S."/>
            <person name="Gariboldi M."/>
            <person name="Georgii-Hemming P."/>
            <person name="Gingeras T.R."/>
            <person name="Gojobori T."/>
            <person name="Green R.E."/>
            <person name="Gustincich S."/>
            <person name="Harbers M."/>
            <person name="Hayashi Y."/>
            <person name="Hensch T.K."/>
            <person name="Hirokawa N."/>
            <person name="Hill D."/>
            <person name="Huminiecki L."/>
            <person name="Iacono M."/>
            <person name="Ikeo K."/>
            <person name="Iwama A."/>
            <person name="Ishikawa T."/>
            <person name="Jakt M."/>
            <person name="Kanapin A."/>
            <person name="Katoh M."/>
            <person name="Kawasawa Y."/>
            <person name="Kelso J."/>
            <person name="Kitamura H."/>
            <person name="Kitano H."/>
            <person name="Kollias G."/>
            <person name="Krishnan S.P."/>
            <person name="Kruger A."/>
            <person name="Kummerfeld S.K."/>
            <person name="Kurochkin I.V."/>
            <person name="Lareau L.F."/>
            <person name="Lazarevic D."/>
            <person name="Lipovich L."/>
            <person name="Liu J."/>
            <person name="Liuni S."/>
            <person name="McWilliam S."/>
            <person name="Madan Babu M."/>
            <person name="Madera M."/>
            <person name="Marchionni L."/>
            <person name="Matsuda H."/>
            <person name="Matsuzawa S."/>
            <person name="Miki H."/>
            <person name="Mignone F."/>
            <person name="Miyake S."/>
            <person name="Morris K."/>
            <person name="Mottagui-Tabar S."/>
            <person name="Mulder N."/>
            <person name="Nakano N."/>
            <person name="Nakauchi H."/>
            <person name="Ng P."/>
            <person name="Nilsson R."/>
            <person name="Nishiguchi S."/>
            <person name="Nishikawa S."/>
            <person name="Nori F."/>
            <person name="Ohara O."/>
            <person name="Okazaki Y."/>
            <person name="Orlando V."/>
            <person name="Pang K.C."/>
            <person name="Pavan W.J."/>
            <person name="Pavesi G."/>
            <person name="Pesole G."/>
            <person name="Petrovsky N."/>
            <person name="Piazza S."/>
            <person name="Reed J."/>
            <person name="Reid J.F."/>
            <person name="Ring B.Z."/>
            <person name="Ringwald M."/>
            <person name="Rost B."/>
            <person name="Ruan Y."/>
            <person name="Salzberg S.L."/>
            <person name="Sandelin A."/>
            <person name="Schneider C."/>
            <person name="Schoenbach C."/>
            <person name="Sekiguchi K."/>
            <person name="Semple C.A."/>
            <person name="Seno S."/>
            <person name="Sessa L."/>
            <person name="Sheng Y."/>
            <person name="Shibata Y."/>
            <person name="Shimada H."/>
            <person name="Shimada K."/>
            <person name="Silva D."/>
            <person name="Sinclair B."/>
            <person name="Sperling S."/>
            <person name="Stupka E."/>
            <person name="Sugiura K."/>
            <person name="Sultana R."/>
            <person name="Takenaka Y."/>
            <person name="Taki K."/>
            <person name="Tammoja K."/>
            <person name="Tan S.L."/>
            <person name="Tang S."/>
            <person name="Taylor M.S."/>
            <person name="Tegner J."/>
            <person name="Teichmann S.A."/>
            <person name="Ueda H.R."/>
            <person name="van Nimwegen E."/>
            <person name="Verardo R."/>
            <person name="Wei C.L."/>
            <person name="Yagi K."/>
            <person name="Yamanishi H."/>
            <person name="Zabarovsky E."/>
            <person name="Zhu S."/>
            <person name="Zimmer A."/>
            <person name="Hide W."/>
            <person name="Bult C."/>
            <person name="Grimmond S.M."/>
            <person name="Teasdale R.D."/>
            <person name="Liu E.T."/>
            <person name="Brusic V."/>
            <person name="Quackenbush J."/>
            <person name="Wahlestedt C."/>
            <person name="Mattick J.S."/>
            <person name="Hume D.A."/>
            <person name="Kai C."/>
            <person name="Sasaki D."/>
            <person name="Tomaru Y."/>
            <person name="Fukuda S."/>
            <person name="Kanamori-Katayama M."/>
            <person name="Suzuki M."/>
            <person name="Aoki J."/>
            <person name="Arakawa T."/>
            <person name="Iida J."/>
            <person name="Imamura K."/>
            <person name="Itoh M."/>
            <person name="Kato T."/>
            <person name="Kawaji H."/>
            <person name="Kawagashira N."/>
            <person name="Kawashima T."/>
            <person name="Kojima M."/>
            <person name="Kondo S."/>
            <person name="Konno H."/>
            <person name="Nakano K."/>
            <person name="Ninomiya N."/>
            <person name="Nishio T."/>
            <person name="Okada M."/>
            <person name="Plessy C."/>
            <person name="Shibata K."/>
            <person name="Shiraki T."/>
            <person name="Suzuki S."/>
            <person name="Tagami M."/>
            <person name="Waki K."/>
            <person name="Watahiki A."/>
            <person name="Okamura-Oho Y."/>
            <person name="Suzuki H."/>
            <person name="Kawai J."/>
            <person name="Hayashizaki Y."/>
        </authorList>
    </citation>
    <scope>NUCLEOTIDE SEQUENCE [LARGE SCALE MRNA]</scope>
    <source>
        <strain>C57BL/6J</strain>
        <strain>NOD</strain>
        <tissue>Thymus</tissue>
    </source>
</reference>
<reference key="2">
    <citation type="journal article" date="2004" name="Genome Res.">
        <title>The status, quality, and expansion of the NIH full-length cDNA project: the Mammalian Gene Collection (MGC).</title>
        <authorList>
            <consortium name="The MGC Project Team"/>
        </authorList>
    </citation>
    <scope>NUCLEOTIDE SEQUENCE [LARGE SCALE MRNA]</scope>
    <source>
        <tissue>Mammary tumor</tissue>
    </source>
</reference>
<reference key="3">
    <citation type="journal article" date="2010" name="Cell">
        <title>A tissue-specific atlas of mouse protein phosphorylation and expression.</title>
        <authorList>
            <person name="Huttlin E.L."/>
            <person name="Jedrychowski M.P."/>
            <person name="Elias J.E."/>
            <person name="Goswami T."/>
            <person name="Rad R."/>
            <person name="Beausoleil S.A."/>
            <person name="Villen J."/>
            <person name="Haas W."/>
            <person name="Sowa M.E."/>
            <person name="Gygi S.P."/>
        </authorList>
    </citation>
    <scope>IDENTIFICATION BY MASS SPECTROMETRY [LARGE SCALE ANALYSIS]</scope>
    <source>
        <tissue>Brain</tissue>
        <tissue>Brown adipose tissue</tissue>
        <tissue>Kidney</tissue>
        <tissue>Liver</tissue>
        <tissue>Lung</tissue>
        <tissue>Testis</tissue>
    </source>
</reference>
<reference key="4">
    <citation type="journal article" date="2006" name="J. Mol. Biol.">
        <title>Structure of the Bet3-Tpc6B core of TRAPP: two Tpc6 paralogs form trimeric complexes with Bet3 and Mum2.</title>
        <authorList>
            <person name="Kummel D."/>
            <person name="Muller J.J."/>
            <person name="Roske Y."/>
            <person name="Henke N."/>
            <person name="Heinemann U."/>
        </authorList>
    </citation>
    <scope>TISSUE SPECIFICITY</scope>
</reference>
<proteinExistence type="evidence at protein level"/>
<dbReference type="EMBL" id="AK020026">
    <property type="protein sequence ID" value="BAB31972.1"/>
    <property type="molecule type" value="mRNA"/>
</dbReference>
<dbReference type="EMBL" id="AK089083">
    <property type="protein sequence ID" value="BAC40741.1"/>
    <property type="molecule type" value="mRNA"/>
</dbReference>
<dbReference type="EMBL" id="BC031464">
    <property type="protein sequence ID" value="AAH31464.1"/>
    <property type="molecule type" value="mRNA"/>
</dbReference>
<dbReference type="CCDS" id="CCDS25932.1"/>
<dbReference type="RefSeq" id="NP_001293146.1">
    <property type="nucleotide sequence ID" value="NM_001306217.1"/>
</dbReference>
<dbReference type="RefSeq" id="NP_001293147.1">
    <property type="nucleotide sequence ID" value="NM_001306218.1"/>
</dbReference>
<dbReference type="RefSeq" id="NP_084333.1">
    <property type="nucleotide sequence ID" value="NM_030057.3"/>
</dbReference>
<dbReference type="SMR" id="Q9D289"/>
<dbReference type="BioGRID" id="219264">
    <property type="interactions" value="6"/>
</dbReference>
<dbReference type="ComplexPortal" id="CPX-4764">
    <property type="entry name" value="TRAPP II complex"/>
</dbReference>
<dbReference type="FunCoup" id="Q9D289">
    <property type="interactions" value="1575"/>
</dbReference>
<dbReference type="IntAct" id="Q9D289">
    <property type="interactions" value="2"/>
</dbReference>
<dbReference type="STRING" id="10090.ENSMUSP00000021380"/>
<dbReference type="GlyGen" id="Q9D289">
    <property type="glycosylation" value="1 site, 1 O-linked glycan (1 site)"/>
</dbReference>
<dbReference type="iPTMnet" id="Q9D289"/>
<dbReference type="PhosphoSitePlus" id="Q9D289"/>
<dbReference type="SwissPalm" id="Q9D289"/>
<dbReference type="PaxDb" id="10090-ENSMUSP00000021380"/>
<dbReference type="PeptideAtlas" id="Q9D289"/>
<dbReference type="ProteomicsDB" id="259164"/>
<dbReference type="Pumba" id="Q9D289"/>
<dbReference type="Antibodypedia" id="23365">
    <property type="antibodies" value="61 antibodies from 18 providers"/>
</dbReference>
<dbReference type="DNASU" id="78232"/>
<dbReference type="Ensembl" id="ENSMUST00000021380.10">
    <property type="protein sequence ID" value="ENSMUSP00000021380.9"/>
    <property type="gene ID" value="ENSMUSG00000020993.10"/>
</dbReference>
<dbReference type="GeneID" id="78232"/>
<dbReference type="KEGG" id="mmu:78232"/>
<dbReference type="UCSC" id="uc007npy.1">
    <property type="organism name" value="mouse"/>
</dbReference>
<dbReference type="AGR" id="MGI:1925482"/>
<dbReference type="CTD" id="122553"/>
<dbReference type="MGI" id="MGI:1925482">
    <property type="gene designation" value="Trappc6b"/>
</dbReference>
<dbReference type="VEuPathDB" id="HostDB:ENSMUSG00000020993"/>
<dbReference type="eggNOG" id="KOG3316">
    <property type="taxonomic scope" value="Eukaryota"/>
</dbReference>
<dbReference type="GeneTree" id="ENSGT00390000012948"/>
<dbReference type="HOGENOM" id="CLU_076409_3_1_1"/>
<dbReference type="InParanoid" id="Q9D289"/>
<dbReference type="OMA" id="CKEFWTA"/>
<dbReference type="OrthoDB" id="941624at2759"/>
<dbReference type="PhylomeDB" id="Q9D289"/>
<dbReference type="TreeFam" id="TF313010"/>
<dbReference type="Reactome" id="R-MMU-204005">
    <property type="pathway name" value="COPII-mediated vesicle transport"/>
</dbReference>
<dbReference type="Reactome" id="R-MMU-8876198">
    <property type="pathway name" value="RAB GEFs exchange GTP for GDP on RABs"/>
</dbReference>
<dbReference type="BioGRID-ORCS" id="78232">
    <property type="hits" value="2 hits in 78 CRISPR screens"/>
</dbReference>
<dbReference type="ChiTaRS" id="Trappc6b">
    <property type="organism name" value="mouse"/>
</dbReference>
<dbReference type="PRO" id="PR:Q9D289"/>
<dbReference type="Proteomes" id="UP000000589">
    <property type="component" value="Chromosome 12"/>
</dbReference>
<dbReference type="RNAct" id="Q9D289">
    <property type="molecule type" value="protein"/>
</dbReference>
<dbReference type="Bgee" id="ENSMUSG00000020993">
    <property type="expression patterns" value="Expressed in retinal neural layer and 84 other cell types or tissues"/>
</dbReference>
<dbReference type="ExpressionAtlas" id="Q9D289">
    <property type="expression patterns" value="baseline and differential"/>
</dbReference>
<dbReference type="GO" id="GO:0005737">
    <property type="term" value="C:cytoplasm"/>
    <property type="evidence" value="ECO:0000303"/>
    <property type="project" value="ComplexPortal"/>
</dbReference>
<dbReference type="GO" id="GO:0005783">
    <property type="term" value="C:endoplasmic reticulum"/>
    <property type="evidence" value="ECO:0007669"/>
    <property type="project" value="UniProtKB-SubCell"/>
</dbReference>
<dbReference type="GO" id="GO:1990071">
    <property type="term" value="C:TRAPPII protein complex"/>
    <property type="evidence" value="ECO:0000303"/>
    <property type="project" value="ComplexPortal"/>
</dbReference>
<dbReference type="GO" id="GO:0006888">
    <property type="term" value="P:endoplasmic reticulum to Golgi vesicle-mediated transport"/>
    <property type="evidence" value="ECO:0000303"/>
    <property type="project" value="ComplexPortal"/>
</dbReference>
<dbReference type="GO" id="GO:0007399">
    <property type="term" value="P:nervous system development"/>
    <property type="evidence" value="ECO:0007669"/>
    <property type="project" value="UniProtKB-KW"/>
</dbReference>
<dbReference type="GO" id="GO:0006901">
    <property type="term" value="P:vesicle coating"/>
    <property type="evidence" value="ECO:0000303"/>
    <property type="project" value="ComplexPortal"/>
</dbReference>
<dbReference type="GO" id="GO:0099022">
    <property type="term" value="P:vesicle tethering"/>
    <property type="evidence" value="ECO:0000303"/>
    <property type="project" value="ComplexPortal"/>
</dbReference>
<dbReference type="CDD" id="cd14944">
    <property type="entry name" value="TRAPPC6A_Trs33"/>
    <property type="match status" value="1"/>
</dbReference>
<dbReference type="FunFam" id="3.30.1380.20:FF:000004">
    <property type="entry name" value="Trafficking protein particle complex subunit 6B"/>
    <property type="match status" value="1"/>
</dbReference>
<dbReference type="Gene3D" id="3.30.1380.20">
    <property type="entry name" value="Trafficking protein particle complex subunit 3"/>
    <property type="match status" value="1"/>
</dbReference>
<dbReference type="InterPro" id="IPR024096">
    <property type="entry name" value="NO_sig/Golgi_transp_ligand-bd"/>
</dbReference>
<dbReference type="InterPro" id="IPR007194">
    <property type="entry name" value="TRAPP_component"/>
</dbReference>
<dbReference type="InterPro" id="IPR037992">
    <property type="entry name" value="TRAPPC6/Trs33"/>
</dbReference>
<dbReference type="PANTHER" id="PTHR12817">
    <property type="entry name" value="TRAFFICKING PROTEIN PARTICLE COMPLEX SUBUNIT 6B"/>
    <property type="match status" value="1"/>
</dbReference>
<dbReference type="PANTHER" id="PTHR12817:SF3">
    <property type="entry name" value="TRAFFICKING PROTEIN PARTICLE COMPLEX SUBUNIT 6B"/>
    <property type="match status" value="1"/>
</dbReference>
<dbReference type="Pfam" id="PF04051">
    <property type="entry name" value="TRAPP"/>
    <property type="match status" value="1"/>
</dbReference>
<dbReference type="SUPFAM" id="SSF111126">
    <property type="entry name" value="Ligand-binding domain in the NO signalling and Golgi transport"/>
    <property type="match status" value="1"/>
</dbReference>
<evidence type="ECO:0000250" key="1"/>
<evidence type="ECO:0000250" key="2">
    <source>
        <dbReference type="UniProtKB" id="Q86SZ2"/>
    </source>
</evidence>
<evidence type="ECO:0000269" key="3">
    <source>
    </source>
</evidence>
<evidence type="ECO:0000305" key="4"/>
<evidence type="ECO:0000312" key="5">
    <source>
        <dbReference type="MGI" id="MGI:1925482"/>
    </source>
</evidence>
<name>TPC6B_MOUSE</name>
<organism>
    <name type="scientific">Mus musculus</name>
    <name type="common">Mouse</name>
    <dbReference type="NCBI Taxonomy" id="10090"/>
    <lineage>
        <taxon>Eukaryota</taxon>
        <taxon>Metazoa</taxon>
        <taxon>Chordata</taxon>
        <taxon>Craniata</taxon>
        <taxon>Vertebrata</taxon>
        <taxon>Euteleostomi</taxon>
        <taxon>Mammalia</taxon>
        <taxon>Eutheria</taxon>
        <taxon>Euarchontoglires</taxon>
        <taxon>Glires</taxon>
        <taxon>Rodentia</taxon>
        <taxon>Myomorpha</taxon>
        <taxon>Muroidea</taxon>
        <taxon>Muridae</taxon>
        <taxon>Murinae</taxon>
        <taxon>Mus</taxon>
        <taxon>Mus</taxon>
    </lineage>
</organism>
<accession>Q9D289</accession>
<feature type="chain" id="PRO_0000211588" description="Trafficking protein particle complex subunit 6B">
    <location>
        <begin position="1"/>
        <end position="158"/>
    </location>
</feature>
<comment type="function">
    <text evidence="2">Component of a transport protein particle (TRAPP) complex that may function in specific stages of inter-organelle traffic (By similarity). Specifically involved in the early development of neural circuitry, likely by controlling the frequency and amplitude of intracellular calcium transients implicated in the regulation of neuron differentiation and survival (By similarity).</text>
</comment>
<comment type="subunit">
    <text evidence="2">Homodimer (By similarity). Part of a TRAPP complex. Heterodimer with TRAPPC3 (By similarity). The heterodimer TRAPPC6B-TRAPPC3 interacts with TRAPPC1 likely providing a core for TRAPP complex formation (By similarity).</text>
</comment>
<comment type="subcellular location">
    <subcellularLocation>
        <location evidence="1">Golgi apparatus</location>
        <location evidence="1">cis-Golgi network</location>
    </subcellularLocation>
    <subcellularLocation>
        <location evidence="1">Endoplasmic reticulum</location>
    </subcellularLocation>
</comment>
<comment type="tissue specificity">
    <text evidence="3">Widely expressed. Expressed in lung, heart, liver, spleen, brain and kidney.</text>
</comment>
<comment type="similarity">
    <text evidence="4">Belongs to the TRAPP small subunits family. BET3 subfamily.</text>
</comment>
<protein>
    <recommendedName>
        <fullName evidence="2">Trafficking protein particle complex subunit 6B</fullName>
        <shortName>TRAPP complex subunit 6B</shortName>
    </recommendedName>
</protein>